<proteinExistence type="inferred from homology"/>
<sequence>MATIKVTQVKSAIGRLPKHRATITGLGLRRINHTVELEDTPAVRGMVNKVHYMVKVEG</sequence>
<dbReference type="EMBL" id="CP000510">
    <property type="protein sequence ID" value="ABM05189.1"/>
    <property type="molecule type" value="Genomic_DNA"/>
</dbReference>
<dbReference type="RefSeq" id="WP_011771737.1">
    <property type="nucleotide sequence ID" value="NC_008709.1"/>
</dbReference>
<dbReference type="SMR" id="A1T0C4"/>
<dbReference type="STRING" id="357804.Ping_3506"/>
<dbReference type="KEGG" id="pin:Ping_3506"/>
<dbReference type="eggNOG" id="COG1841">
    <property type="taxonomic scope" value="Bacteria"/>
</dbReference>
<dbReference type="HOGENOM" id="CLU_131047_1_4_6"/>
<dbReference type="OrthoDB" id="9812790at2"/>
<dbReference type="Proteomes" id="UP000000639">
    <property type="component" value="Chromosome"/>
</dbReference>
<dbReference type="GO" id="GO:0022625">
    <property type="term" value="C:cytosolic large ribosomal subunit"/>
    <property type="evidence" value="ECO:0007669"/>
    <property type="project" value="TreeGrafter"/>
</dbReference>
<dbReference type="GO" id="GO:0003735">
    <property type="term" value="F:structural constituent of ribosome"/>
    <property type="evidence" value="ECO:0007669"/>
    <property type="project" value="InterPro"/>
</dbReference>
<dbReference type="GO" id="GO:0006412">
    <property type="term" value="P:translation"/>
    <property type="evidence" value="ECO:0007669"/>
    <property type="project" value="UniProtKB-UniRule"/>
</dbReference>
<dbReference type="CDD" id="cd01658">
    <property type="entry name" value="Ribosomal_L30"/>
    <property type="match status" value="1"/>
</dbReference>
<dbReference type="FunFam" id="3.30.1390.20:FF:000001">
    <property type="entry name" value="50S ribosomal protein L30"/>
    <property type="match status" value="1"/>
</dbReference>
<dbReference type="Gene3D" id="3.30.1390.20">
    <property type="entry name" value="Ribosomal protein L30, ferredoxin-like fold domain"/>
    <property type="match status" value="1"/>
</dbReference>
<dbReference type="HAMAP" id="MF_01371_B">
    <property type="entry name" value="Ribosomal_uL30_B"/>
    <property type="match status" value="1"/>
</dbReference>
<dbReference type="InterPro" id="IPR036919">
    <property type="entry name" value="Ribo_uL30_ferredoxin-like_sf"/>
</dbReference>
<dbReference type="InterPro" id="IPR005996">
    <property type="entry name" value="Ribosomal_uL30_bac-type"/>
</dbReference>
<dbReference type="InterPro" id="IPR018038">
    <property type="entry name" value="Ribosomal_uL30_CS"/>
</dbReference>
<dbReference type="InterPro" id="IPR016082">
    <property type="entry name" value="Ribosomal_uL30_ferredoxin-like"/>
</dbReference>
<dbReference type="NCBIfam" id="TIGR01308">
    <property type="entry name" value="rpmD_bact"/>
    <property type="match status" value="1"/>
</dbReference>
<dbReference type="PANTHER" id="PTHR15892:SF2">
    <property type="entry name" value="LARGE RIBOSOMAL SUBUNIT PROTEIN UL30M"/>
    <property type="match status" value="1"/>
</dbReference>
<dbReference type="PANTHER" id="PTHR15892">
    <property type="entry name" value="MITOCHONDRIAL RIBOSOMAL PROTEIN L30"/>
    <property type="match status" value="1"/>
</dbReference>
<dbReference type="Pfam" id="PF00327">
    <property type="entry name" value="Ribosomal_L30"/>
    <property type="match status" value="1"/>
</dbReference>
<dbReference type="PIRSF" id="PIRSF002211">
    <property type="entry name" value="Ribosomal_L30_bac-type"/>
    <property type="match status" value="1"/>
</dbReference>
<dbReference type="SUPFAM" id="SSF55129">
    <property type="entry name" value="Ribosomal protein L30p/L7e"/>
    <property type="match status" value="1"/>
</dbReference>
<dbReference type="PROSITE" id="PS00634">
    <property type="entry name" value="RIBOSOMAL_L30"/>
    <property type="match status" value="1"/>
</dbReference>
<protein>
    <recommendedName>
        <fullName evidence="1">Large ribosomal subunit protein uL30</fullName>
    </recommendedName>
    <alternativeName>
        <fullName evidence="2">50S ribosomal protein L30</fullName>
    </alternativeName>
</protein>
<evidence type="ECO:0000255" key="1">
    <source>
        <dbReference type="HAMAP-Rule" id="MF_01371"/>
    </source>
</evidence>
<evidence type="ECO:0000305" key="2"/>
<keyword id="KW-1185">Reference proteome</keyword>
<keyword id="KW-0687">Ribonucleoprotein</keyword>
<keyword id="KW-0689">Ribosomal protein</keyword>
<name>RL30_PSYIN</name>
<gene>
    <name evidence="1" type="primary">rpmD</name>
    <name type="ordered locus">Ping_3506</name>
</gene>
<reference key="1">
    <citation type="journal article" date="2008" name="BMC Genomics">
        <title>Genomics of an extreme psychrophile, Psychromonas ingrahamii.</title>
        <authorList>
            <person name="Riley M."/>
            <person name="Staley J.T."/>
            <person name="Danchin A."/>
            <person name="Wang T.Z."/>
            <person name="Brettin T.S."/>
            <person name="Hauser L.J."/>
            <person name="Land M.L."/>
            <person name="Thompson L.S."/>
        </authorList>
    </citation>
    <scope>NUCLEOTIDE SEQUENCE [LARGE SCALE GENOMIC DNA]</scope>
    <source>
        <strain>DSM 17664 / CCUG 51855 / 37</strain>
    </source>
</reference>
<comment type="subunit">
    <text evidence="1">Part of the 50S ribosomal subunit.</text>
</comment>
<comment type="similarity">
    <text evidence="1">Belongs to the universal ribosomal protein uL30 family.</text>
</comment>
<feature type="chain" id="PRO_0000347132" description="Large ribosomal subunit protein uL30">
    <location>
        <begin position="1"/>
        <end position="58"/>
    </location>
</feature>
<accession>A1T0C4</accession>
<organism>
    <name type="scientific">Psychromonas ingrahamii (strain DSM 17664 / CCUG 51855 / 37)</name>
    <dbReference type="NCBI Taxonomy" id="357804"/>
    <lineage>
        <taxon>Bacteria</taxon>
        <taxon>Pseudomonadati</taxon>
        <taxon>Pseudomonadota</taxon>
        <taxon>Gammaproteobacteria</taxon>
        <taxon>Alteromonadales</taxon>
        <taxon>Psychromonadaceae</taxon>
        <taxon>Psychromonas</taxon>
    </lineage>
</organism>